<gene>
    <name evidence="1" type="primary">ung</name>
    <name type="ordered locus">LCK_00553</name>
</gene>
<keyword id="KW-0963">Cytoplasm</keyword>
<keyword id="KW-0227">DNA damage</keyword>
<keyword id="KW-0234">DNA repair</keyword>
<keyword id="KW-0378">Hydrolase</keyword>
<keyword id="KW-1185">Reference proteome</keyword>
<accession>B1MXY4</accession>
<feature type="chain" id="PRO_1000096591" description="Uracil-DNA glycosylase">
    <location>
        <begin position="1"/>
        <end position="219"/>
    </location>
</feature>
<feature type="active site" description="Proton acceptor" evidence="1">
    <location>
        <position position="64"/>
    </location>
</feature>
<sequence length="219" mass="24102">MPLSHTTWAPYINAKLTPEQINNIKQFLDVQYQEQSIFPPKEKVFAALSMTSLDHTKVVIMGQDPYHGLGQAQGLSFSVPDAVPAPPSLQNILKELATDIGPRASHDLTSWAKQGVLLLNAVLTVPEGQANAHAGLVWEPLTDAIIQAVSDAGEPTVFILWGKFAQSKRRYIDESKHLVLTAAHPSPLSAYRGFFGSHPFSKANQFLTQNGRDSIHWLE</sequence>
<comment type="function">
    <text evidence="1">Excises uracil residues from the DNA which can arise as a result of misincorporation of dUMP residues by DNA polymerase or due to deamination of cytosine.</text>
</comment>
<comment type="catalytic activity">
    <reaction evidence="1">
        <text>Hydrolyzes single-stranded DNA or mismatched double-stranded DNA and polynucleotides, releasing free uracil.</text>
        <dbReference type="EC" id="3.2.2.27"/>
    </reaction>
</comment>
<comment type="subcellular location">
    <subcellularLocation>
        <location evidence="1">Cytoplasm</location>
    </subcellularLocation>
</comment>
<comment type="similarity">
    <text evidence="1">Belongs to the uracil-DNA glycosylase (UDG) superfamily. UNG family.</text>
</comment>
<dbReference type="EC" id="3.2.2.27" evidence="1"/>
<dbReference type="EMBL" id="DQ489736">
    <property type="protein sequence ID" value="ACA82386.1"/>
    <property type="molecule type" value="Genomic_DNA"/>
</dbReference>
<dbReference type="RefSeq" id="WP_004900401.1">
    <property type="nucleotide sequence ID" value="NC_010471.1"/>
</dbReference>
<dbReference type="SMR" id="B1MXY4"/>
<dbReference type="STRING" id="349519.LCK_00553"/>
<dbReference type="KEGG" id="lci:LCK_00553"/>
<dbReference type="eggNOG" id="COG0692">
    <property type="taxonomic scope" value="Bacteria"/>
</dbReference>
<dbReference type="HOGENOM" id="CLU_032162_3_1_9"/>
<dbReference type="OrthoDB" id="9804372at2"/>
<dbReference type="Proteomes" id="UP000002166">
    <property type="component" value="Chromosome"/>
</dbReference>
<dbReference type="GO" id="GO:0005737">
    <property type="term" value="C:cytoplasm"/>
    <property type="evidence" value="ECO:0007669"/>
    <property type="project" value="UniProtKB-SubCell"/>
</dbReference>
<dbReference type="GO" id="GO:0004844">
    <property type="term" value="F:uracil DNA N-glycosylase activity"/>
    <property type="evidence" value="ECO:0007669"/>
    <property type="project" value="UniProtKB-UniRule"/>
</dbReference>
<dbReference type="GO" id="GO:0097510">
    <property type="term" value="P:base-excision repair, AP site formation via deaminated base removal"/>
    <property type="evidence" value="ECO:0007669"/>
    <property type="project" value="TreeGrafter"/>
</dbReference>
<dbReference type="CDD" id="cd10027">
    <property type="entry name" value="UDG-F1-like"/>
    <property type="match status" value="1"/>
</dbReference>
<dbReference type="Gene3D" id="3.40.470.10">
    <property type="entry name" value="Uracil-DNA glycosylase-like domain"/>
    <property type="match status" value="1"/>
</dbReference>
<dbReference type="HAMAP" id="MF_00148">
    <property type="entry name" value="UDG"/>
    <property type="match status" value="1"/>
</dbReference>
<dbReference type="InterPro" id="IPR002043">
    <property type="entry name" value="UDG_fam1"/>
</dbReference>
<dbReference type="InterPro" id="IPR018085">
    <property type="entry name" value="Ura-DNA_Glyclase_AS"/>
</dbReference>
<dbReference type="InterPro" id="IPR005122">
    <property type="entry name" value="Uracil-DNA_glycosylase-like"/>
</dbReference>
<dbReference type="InterPro" id="IPR036895">
    <property type="entry name" value="Uracil-DNA_glycosylase-like_sf"/>
</dbReference>
<dbReference type="NCBIfam" id="NF003588">
    <property type="entry name" value="PRK05254.1-1"/>
    <property type="match status" value="1"/>
</dbReference>
<dbReference type="NCBIfam" id="NF003589">
    <property type="entry name" value="PRK05254.1-2"/>
    <property type="match status" value="1"/>
</dbReference>
<dbReference type="NCBIfam" id="NF003591">
    <property type="entry name" value="PRK05254.1-4"/>
    <property type="match status" value="1"/>
</dbReference>
<dbReference type="NCBIfam" id="NF003592">
    <property type="entry name" value="PRK05254.1-5"/>
    <property type="match status" value="1"/>
</dbReference>
<dbReference type="NCBIfam" id="TIGR00628">
    <property type="entry name" value="ung"/>
    <property type="match status" value="1"/>
</dbReference>
<dbReference type="PANTHER" id="PTHR11264">
    <property type="entry name" value="URACIL-DNA GLYCOSYLASE"/>
    <property type="match status" value="1"/>
</dbReference>
<dbReference type="PANTHER" id="PTHR11264:SF0">
    <property type="entry name" value="URACIL-DNA GLYCOSYLASE"/>
    <property type="match status" value="1"/>
</dbReference>
<dbReference type="Pfam" id="PF03167">
    <property type="entry name" value="UDG"/>
    <property type="match status" value="1"/>
</dbReference>
<dbReference type="SMART" id="SM00986">
    <property type="entry name" value="UDG"/>
    <property type="match status" value="1"/>
</dbReference>
<dbReference type="SMART" id="SM00987">
    <property type="entry name" value="UreE_C"/>
    <property type="match status" value="1"/>
</dbReference>
<dbReference type="SUPFAM" id="SSF52141">
    <property type="entry name" value="Uracil-DNA glycosylase-like"/>
    <property type="match status" value="1"/>
</dbReference>
<dbReference type="PROSITE" id="PS00130">
    <property type="entry name" value="U_DNA_GLYCOSYLASE"/>
    <property type="match status" value="1"/>
</dbReference>
<evidence type="ECO:0000255" key="1">
    <source>
        <dbReference type="HAMAP-Rule" id="MF_00148"/>
    </source>
</evidence>
<organism>
    <name type="scientific">Leuconostoc citreum (strain KM20)</name>
    <dbReference type="NCBI Taxonomy" id="349519"/>
    <lineage>
        <taxon>Bacteria</taxon>
        <taxon>Bacillati</taxon>
        <taxon>Bacillota</taxon>
        <taxon>Bacilli</taxon>
        <taxon>Lactobacillales</taxon>
        <taxon>Lactobacillaceae</taxon>
        <taxon>Leuconostoc</taxon>
    </lineage>
</organism>
<name>UNG_LEUCK</name>
<reference key="1">
    <citation type="journal article" date="2008" name="J. Bacteriol.">
        <title>Complete genome sequence of Leuconostoc citreum KM20.</title>
        <authorList>
            <person name="Kim J.F."/>
            <person name="Jeong H."/>
            <person name="Lee J.-S."/>
            <person name="Choi S.-H."/>
            <person name="Ha M."/>
            <person name="Hur C.-G."/>
            <person name="Kim J.-S."/>
            <person name="Lee S."/>
            <person name="Park H.-S."/>
            <person name="Park Y.-H."/>
            <person name="Oh T.K."/>
        </authorList>
    </citation>
    <scope>NUCLEOTIDE SEQUENCE [LARGE SCALE GENOMIC DNA]</scope>
    <source>
        <strain>KM20</strain>
    </source>
</reference>
<proteinExistence type="inferred from homology"/>
<protein>
    <recommendedName>
        <fullName evidence="1">Uracil-DNA glycosylase</fullName>
        <shortName evidence="1">UDG</shortName>
        <ecNumber evidence="1">3.2.2.27</ecNumber>
    </recommendedName>
</protein>